<proteinExistence type="inferred from homology"/>
<name>GUAA_GLOVI</name>
<protein>
    <recommendedName>
        <fullName evidence="1">GMP synthase [glutamine-hydrolyzing]</fullName>
        <ecNumber evidence="1">6.3.5.2</ecNumber>
    </recommendedName>
    <alternativeName>
        <fullName evidence="1">GMP synthetase</fullName>
    </alternativeName>
    <alternativeName>
        <fullName evidence="1">Glutamine amidotransferase</fullName>
    </alternativeName>
</protein>
<dbReference type="EC" id="6.3.5.2" evidence="1"/>
<dbReference type="EMBL" id="BA000045">
    <property type="protein sequence ID" value="BAC90556.1"/>
    <property type="molecule type" value="Genomic_DNA"/>
</dbReference>
<dbReference type="RefSeq" id="NP_925561.1">
    <property type="nucleotide sequence ID" value="NC_005125.1"/>
</dbReference>
<dbReference type="RefSeq" id="WP_011142609.1">
    <property type="nucleotide sequence ID" value="NC_005125.1"/>
</dbReference>
<dbReference type="SMR" id="Q7NHC2"/>
<dbReference type="FunCoup" id="Q7NHC2">
    <property type="interactions" value="381"/>
</dbReference>
<dbReference type="STRING" id="251221.gene:10760115"/>
<dbReference type="EnsemblBacteria" id="BAC90556">
    <property type="protein sequence ID" value="BAC90556"/>
    <property type="gene ID" value="BAC90556"/>
</dbReference>
<dbReference type="KEGG" id="gvi:glr2615"/>
<dbReference type="PATRIC" id="fig|251221.4.peg.2655"/>
<dbReference type="eggNOG" id="COG0518">
    <property type="taxonomic scope" value="Bacteria"/>
</dbReference>
<dbReference type="eggNOG" id="COG0519">
    <property type="taxonomic scope" value="Bacteria"/>
</dbReference>
<dbReference type="HOGENOM" id="CLU_014340_0_5_3"/>
<dbReference type="InParanoid" id="Q7NHC2"/>
<dbReference type="OrthoDB" id="9802219at2"/>
<dbReference type="PhylomeDB" id="Q7NHC2"/>
<dbReference type="UniPathway" id="UPA00189">
    <property type="reaction ID" value="UER00296"/>
</dbReference>
<dbReference type="Proteomes" id="UP000000557">
    <property type="component" value="Chromosome"/>
</dbReference>
<dbReference type="GO" id="GO:0005829">
    <property type="term" value="C:cytosol"/>
    <property type="evidence" value="ECO:0000318"/>
    <property type="project" value="GO_Central"/>
</dbReference>
<dbReference type="GO" id="GO:0005524">
    <property type="term" value="F:ATP binding"/>
    <property type="evidence" value="ECO:0007669"/>
    <property type="project" value="UniProtKB-UniRule"/>
</dbReference>
<dbReference type="GO" id="GO:0003921">
    <property type="term" value="F:GMP synthase activity"/>
    <property type="evidence" value="ECO:0000318"/>
    <property type="project" value="GO_Central"/>
</dbReference>
<dbReference type="GO" id="GO:0006177">
    <property type="term" value="P:GMP biosynthetic process"/>
    <property type="evidence" value="ECO:0000318"/>
    <property type="project" value="GO_Central"/>
</dbReference>
<dbReference type="CDD" id="cd01742">
    <property type="entry name" value="GATase1_GMP_Synthase"/>
    <property type="match status" value="1"/>
</dbReference>
<dbReference type="CDD" id="cd01997">
    <property type="entry name" value="GMP_synthase_C"/>
    <property type="match status" value="1"/>
</dbReference>
<dbReference type="FunFam" id="3.30.300.10:FF:000002">
    <property type="entry name" value="GMP synthase [glutamine-hydrolyzing]"/>
    <property type="match status" value="1"/>
</dbReference>
<dbReference type="FunFam" id="3.40.50.620:FF:000001">
    <property type="entry name" value="GMP synthase [glutamine-hydrolyzing]"/>
    <property type="match status" value="1"/>
</dbReference>
<dbReference type="FunFam" id="3.40.50.880:FF:000001">
    <property type="entry name" value="GMP synthase [glutamine-hydrolyzing]"/>
    <property type="match status" value="1"/>
</dbReference>
<dbReference type="Gene3D" id="3.30.300.10">
    <property type="match status" value="1"/>
</dbReference>
<dbReference type="Gene3D" id="3.40.50.880">
    <property type="match status" value="1"/>
</dbReference>
<dbReference type="Gene3D" id="3.40.50.620">
    <property type="entry name" value="HUPs"/>
    <property type="match status" value="1"/>
</dbReference>
<dbReference type="HAMAP" id="MF_00344">
    <property type="entry name" value="GMP_synthase"/>
    <property type="match status" value="1"/>
</dbReference>
<dbReference type="InterPro" id="IPR029062">
    <property type="entry name" value="Class_I_gatase-like"/>
</dbReference>
<dbReference type="InterPro" id="IPR017926">
    <property type="entry name" value="GATASE"/>
</dbReference>
<dbReference type="InterPro" id="IPR001674">
    <property type="entry name" value="GMP_synth_C"/>
</dbReference>
<dbReference type="InterPro" id="IPR004739">
    <property type="entry name" value="GMP_synth_GATase"/>
</dbReference>
<dbReference type="InterPro" id="IPR022955">
    <property type="entry name" value="GMP_synthase"/>
</dbReference>
<dbReference type="InterPro" id="IPR025777">
    <property type="entry name" value="GMPS_ATP_PPase_dom"/>
</dbReference>
<dbReference type="InterPro" id="IPR022310">
    <property type="entry name" value="NAD/GMP_synthase"/>
</dbReference>
<dbReference type="InterPro" id="IPR014729">
    <property type="entry name" value="Rossmann-like_a/b/a_fold"/>
</dbReference>
<dbReference type="NCBIfam" id="TIGR00884">
    <property type="entry name" value="guaA_Cterm"/>
    <property type="match status" value="1"/>
</dbReference>
<dbReference type="NCBIfam" id="TIGR00888">
    <property type="entry name" value="guaA_Nterm"/>
    <property type="match status" value="1"/>
</dbReference>
<dbReference type="NCBIfam" id="NF000848">
    <property type="entry name" value="PRK00074.1"/>
    <property type="match status" value="1"/>
</dbReference>
<dbReference type="PANTHER" id="PTHR11922:SF2">
    <property type="entry name" value="GMP SYNTHASE [GLUTAMINE-HYDROLYZING]"/>
    <property type="match status" value="1"/>
</dbReference>
<dbReference type="PANTHER" id="PTHR11922">
    <property type="entry name" value="GMP SYNTHASE-RELATED"/>
    <property type="match status" value="1"/>
</dbReference>
<dbReference type="Pfam" id="PF00117">
    <property type="entry name" value="GATase"/>
    <property type="match status" value="1"/>
</dbReference>
<dbReference type="Pfam" id="PF00958">
    <property type="entry name" value="GMP_synt_C"/>
    <property type="match status" value="1"/>
</dbReference>
<dbReference type="Pfam" id="PF02540">
    <property type="entry name" value="NAD_synthase"/>
    <property type="match status" value="1"/>
</dbReference>
<dbReference type="PRINTS" id="PR00097">
    <property type="entry name" value="ANTSNTHASEII"/>
</dbReference>
<dbReference type="PRINTS" id="PR00099">
    <property type="entry name" value="CPSGATASE"/>
</dbReference>
<dbReference type="PRINTS" id="PR00096">
    <property type="entry name" value="GATASE"/>
</dbReference>
<dbReference type="SUPFAM" id="SSF52402">
    <property type="entry name" value="Adenine nucleotide alpha hydrolases-like"/>
    <property type="match status" value="1"/>
</dbReference>
<dbReference type="SUPFAM" id="SSF52317">
    <property type="entry name" value="Class I glutamine amidotransferase-like"/>
    <property type="match status" value="1"/>
</dbReference>
<dbReference type="SUPFAM" id="SSF54810">
    <property type="entry name" value="GMP synthetase C-terminal dimerisation domain"/>
    <property type="match status" value="1"/>
</dbReference>
<dbReference type="PROSITE" id="PS51273">
    <property type="entry name" value="GATASE_TYPE_1"/>
    <property type="match status" value="1"/>
</dbReference>
<dbReference type="PROSITE" id="PS51553">
    <property type="entry name" value="GMPS_ATP_PPASE"/>
    <property type="match status" value="1"/>
</dbReference>
<comment type="function">
    <text evidence="1">Catalyzes the synthesis of GMP from XMP.</text>
</comment>
<comment type="catalytic activity">
    <reaction evidence="1">
        <text>XMP + L-glutamine + ATP + H2O = GMP + L-glutamate + AMP + diphosphate + 2 H(+)</text>
        <dbReference type="Rhea" id="RHEA:11680"/>
        <dbReference type="ChEBI" id="CHEBI:15377"/>
        <dbReference type="ChEBI" id="CHEBI:15378"/>
        <dbReference type="ChEBI" id="CHEBI:29985"/>
        <dbReference type="ChEBI" id="CHEBI:30616"/>
        <dbReference type="ChEBI" id="CHEBI:33019"/>
        <dbReference type="ChEBI" id="CHEBI:57464"/>
        <dbReference type="ChEBI" id="CHEBI:58115"/>
        <dbReference type="ChEBI" id="CHEBI:58359"/>
        <dbReference type="ChEBI" id="CHEBI:456215"/>
        <dbReference type="EC" id="6.3.5.2"/>
    </reaction>
</comment>
<comment type="pathway">
    <text evidence="1">Purine metabolism; GMP biosynthesis; GMP from XMP (L-Gln route): step 1/1.</text>
</comment>
<comment type="subunit">
    <text evidence="1">Homodimer.</text>
</comment>
<evidence type="ECO:0000255" key="1">
    <source>
        <dbReference type="HAMAP-Rule" id="MF_00344"/>
    </source>
</evidence>
<evidence type="ECO:0000256" key="2">
    <source>
        <dbReference type="SAM" id="MobiDB-lite"/>
    </source>
</evidence>
<reference key="1">
    <citation type="journal article" date="2003" name="DNA Res.">
        <title>Complete genome structure of Gloeobacter violaceus PCC 7421, a cyanobacterium that lacks thylakoids.</title>
        <authorList>
            <person name="Nakamura Y."/>
            <person name="Kaneko T."/>
            <person name="Sato S."/>
            <person name="Mimuro M."/>
            <person name="Miyashita H."/>
            <person name="Tsuchiya T."/>
            <person name="Sasamoto S."/>
            <person name="Watanabe A."/>
            <person name="Kawashima K."/>
            <person name="Kishida Y."/>
            <person name="Kiyokawa C."/>
            <person name="Kohara M."/>
            <person name="Matsumoto M."/>
            <person name="Matsuno A."/>
            <person name="Nakazaki N."/>
            <person name="Shimpo S."/>
            <person name="Takeuchi C."/>
            <person name="Yamada M."/>
            <person name="Tabata S."/>
        </authorList>
    </citation>
    <scope>NUCLEOTIDE SEQUENCE [LARGE SCALE GENOMIC DNA]</scope>
    <source>
        <strain>ATCC 29082 / PCC 7421</strain>
    </source>
</reference>
<accession>Q7NHC2</accession>
<organism>
    <name type="scientific">Gloeobacter violaceus (strain ATCC 29082 / PCC 7421)</name>
    <dbReference type="NCBI Taxonomy" id="251221"/>
    <lineage>
        <taxon>Bacteria</taxon>
        <taxon>Bacillati</taxon>
        <taxon>Cyanobacteriota</taxon>
        <taxon>Cyanophyceae</taxon>
        <taxon>Gloeobacterales</taxon>
        <taxon>Gloeobacteraceae</taxon>
        <taxon>Gloeobacter</taxon>
    </lineage>
</organism>
<gene>
    <name evidence="1" type="primary">guaA</name>
    <name type="ordered locus">glr2615</name>
</gene>
<keyword id="KW-0067">ATP-binding</keyword>
<keyword id="KW-0315">Glutamine amidotransferase</keyword>
<keyword id="KW-0332">GMP biosynthesis</keyword>
<keyword id="KW-0436">Ligase</keyword>
<keyword id="KW-0547">Nucleotide-binding</keyword>
<keyword id="KW-0658">Purine biosynthesis</keyword>
<keyword id="KW-1185">Reference proteome</keyword>
<sequence>MTSSPTAAARTEGEAAPTVPTQVESGTAQRPGLAREMVAILDFGSQYSELIARRIRETKVYSEVLSYQTPIAEIRRLAPKGIILSGGPNSVYEAYAPQCDPALWELGIPILGVCYGMQLMVQQLGGAVERAERAEYGKASLFINDPTDLFTNVEDGTTMWMSHADSVLRMPEGFELLAHTENTPCAAIAHHSRHLYGVQFHPEVVHSRGGMALLRNFVYHICGCEPEWTTAAFIEEAIREVRARVGDKRVLLALSGGVDSSTLAFLLHRAIGDNLTCMFIDQGFMRKNEPERLVKLFKEQFHIPVAYVDAAERFIVRLEGVSDPEQKRKIIGAEFIRVFESESQRLGPFDYLAQGTLYPDIIESAGENIDPKTGERVAVKIKSHHNVGGLPENLRFKLVEPLKRLFKDEVRQVGRALGLPEEIVQRQPFPGPGLAIRVLGELTKDKVDILREADFILRQEVNRSGRYNDYWQSFAVLLPVKTVGVMGDRRTYAYALALRFVTSEDGMTADWARVPYDLLEQIANRIVNEVPGINRVVLDITSKPPGTIEWE</sequence>
<feature type="chain" id="PRO_0000140129" description="GMP synthase [glutamine-hydrolyzing]">
    <location>
        <begin position="1"/>
        <end position="551"/>
    </location>
</feature>
<feature type="domain" description="Glutamine amidotransferase type-1" evidence="1">
    <location>
        <begin position="37"/>
        <end position="227"/>
    </location>
</feature>
<feature type="domain" description="GMPS ATP-PPase" evidence="1">
    <location>
        <begin position="228"/>
        <end position="426"/>
    </location>
</feature>
<feature type="region of interest" description="Disordered" evidence="2">
    <location>
        <begin position="1"/>
        <end position="28"/>
    </location>
</feature>
<feature type="compositionally biased region" description="Polar residues" evidence="2">
    <location>
        <begin position="19"/>
        <end position="28"/>
    </location>
</feature>
<feature type="active site" description="Nucleophile" evidence="1">
    <location>
        <position position="114"/>
    </location>
</feature>
<feature type="active site" evidence="1">
    <location>
        <position position="201"/>
    </location>
</feature>
<feature type="active site" evidence="1">
    <location>
        <position position="203"/>
    </location>
</feature>
<feature type="binding site" evidence="1">
    <location>
        <begin position="255"/>
        <end position="261"/>
    </location>
    <ligand>
        <name>ATP</name>
        <dbReference type="ChEBI" id="CHEBI:30616"/>
    </ligand>
</feature>